<name>SECA_MYCGE</name>
<gene>
    <name evidence="1" type="primary">secA</name>
    <name type="ordered locus">MG072</name>
</gene>
<organism>
    <name type="scientific">Mycoplasma genitalium (strain ATCC 33530 / DSM 19775 / NCTC 10195 / G37)</name>
    <name type="common">Mycoplasmoides genitalium</name>
    <dbReference type="NCBI Taxonomy" id="243273"/>
    <lineage>
        <taxon>Bacteria</taxon>
        <taxon>Bacillati</taxon>
        <taxon>Mycoplasmatota</taxon>
        <taxon>Mycoplasmoidales</taxon>
        <taxon>Mycoplasmoidaceae</taxon>
        <taxon>Mycoplasmoides</taxon>
    </lineage>
</organism>
<reference key="1">
    <citation type="journal article" date="1995" name="Science">
        <title>The minimal gene complement of Mycoplasma genitalium.</title>
        <authorList>
            <person name="Fraser C.M."/>
            <person name="Gocayne J.D."/>
            <person name="White O."/>
            <person name="Adams M.D."/>
            <person name="Clayton R.A."/>
            <person name="Fleischmann R.D."/>
            <person name="Bult C.J."/>
            <person name="Kerlavage A.R."/>
            <person name="Sutton G.G."/>
            <person name="Kelley J.M."/>
            <person name="Fritchman J.L."/>
            <person name="Weidman J.F."/>
            <person name="Small K.V."/>
            <person name="Sandusky M."/>
            <person name="Fuhrmann J.L."/>
            <person name="Nguyen D.T."/>
            <person name="Utterback T.R."/>
            <person name="Saudek D.M."/>
            <person name="Phillips C.A."/>
            <person name="Merrick J.M."/>
            <person name="Tomb J.-F."/>
            <person name="Dougherty B.A."/>
            <person name="Bott K.F."/>
            <person name="Hu P.-C."/>
            <person name="Lucier T.S."/>
            <person name="Peterson S.N."/>
            <person name="Smith H.O."/>
            <person name="Hutchison C.A. III"/>
            <person name="Venter J.C."/>
        </authorList>
    </citation>
    <scope>NUCLEOTIDE SEQUENCE [LARGE SCALE GENOMIC DNA]</scope>
    <source>
        <strain>ATCC 33530 / DSM 19775 / NCTC 10195 / G37</strain>
    </source>
</reference>
<reference key="2">
    <citation type="journal article" date="1993" name="J. Bacteriol.">
        <title>A survey of the Mycoplasma genitalium genome by using random sequencing.</title>
        <authorList>
            <person name="Peterson S.N."/>
            <person name="Hu P.-C."/>
            <person name="Bott K.F."/>
            <person name="Hutchison C.A. III"/>
        </authorList>
    </citation>
    <scope>NUCLEOTIDE SEQUENCE [GENOMIC DNA] OF 494-702 AND 757-806</scope>
    <source>
        <strain>ATCC 33530 / DSM 19775 / NCTC 10195 / G37</strain>
    </source>
</reference>
<sequence length="806" mass="91585">MAIFNFLKLISPKNRILSKANRIASEVESYKNYYRNLTDQQLFEESNKLVDLVTKQNYTILDVCVAALALIREVVYRETGEFAYRVQIIGAFIVLSGDFAEMMTGEGKTLTIVLAAYVSALEKRGVHVVTVNEYLAQRDANNAMKILKRVGMSVGCNFANLSPQLKQAAFNCDVTYTTNSELGFDYLRDNMVHSYQDKKIRELHFAIVDEGDSVLIDEARTPLIISGPSKNEFGLYVAVDRFVKSLTEQEFKIDPESRAASLTELGIKKAEQTFKKENLFALENSDLFHKIMNGLTAVKVFEQGKEYIVRDGKVLIVDHFTGRILEGRSYSNGLQQAVQAKEYVEIEPENVIVATITYQSFFRLYNRLAAVSGTALTESEEFLKIYNMVVVPVPTNRPNIRKDRSDSVFGTPQIKWMAVVKEIKKIHETSRPILIGTANIDDSELLHNLLLEANIPHEVLNAKNHSREAEIVTKAGQKNAVTISTNMAGRGTDIRLGEGVAEMGGLYVLGTERNESRRIDNQLRGRAARQGDKGETKFFISLGDSLFKRFAHDKIERAISKLGNETFDSAFFSKMLSRTQKRVEAINFDTRKNLIDYDHVLASQRELIYKQRDKFLLANDLSEMIDKMLEKFVQQFCDQYRNQKNQNLINHIALAEALNLEMNMQNTINPKVFENMTFDVAVDKTRNLVAKKISDKVNVLTKPIALNRFRDIIITSMDKHWTEHLDSVFKLREGVVLRSMEHTSPLNVYIKETDILFKTMLQKIAQDVIVQIANLTTPDEFDHSLMQANALKKLAAIKADEKSNQE</sequence>
<dbReference type="EC" id="7.4.2.8" evidence="1"/>
<dbReference type="EMBL" id="L43967">
    <property type="protein sequence ID" value="AAC71290.1"/>
    <property type="molecule type" value="Genomic_DNA"/>
</dbReference>
<dbReference type="EMBL" id="U01732">
    <property type="protein sequence ID" value="AAD10541.1"/>
    <property type="molecule type" value="Genomic_DNA"/>
</dbReference>
<dbReference type="EMBL" id="U01743">
    <property type="protein sequence ID" value="AAD10553.1"/>
    <property type="molecule type" value="Genomic_DNA"/>
</dbReference>
<dbReference type="PIR" id="I64207">
    <property type="entry name" value="I64207"/>
</dbReference>
<dbReference type="RefSeq" id="WP_009885928.1">
    <property type="nucleotide sequence ID" value="NC_000908.2"/>
</dbReference>
<dbReference type="SMR" id="P47318"/>
<dbReference type="FunCoup" id="P47318">
    <property type="interactions" value="189"/>
</dbReference>
<dbReference type="STRING" id="243273.MG_072"/>
<dbReference type="GeneID" id="88282195"/>
<dbReference type="KEGG" id="mge:MG_072"/>
<dbReference type="eggNOG" id="COG0653">
    <property type="taxonomic scope" value="Bacteria"/>
</dbReference>
<dbReference type="HOGENOM" id="CLU_005314_3_0_14"/>
<dbReference type="InParanoid" id="P47318"/>
<dbReference type="OrthoDB" id="9805579at2"/>
<dbReference type="BioCyc" id="MGEN243273:G1GJ2-84-MONOMER"/>
<dbReference type="Proteomes" id="UP000000807">
    <property type="component" value="Chromosome"/>
</dbReference>
<dbReference type="GO" id="GO:0031522">
    <property type="term" value="C:cell envelope Sec protein transport complex"/>
    <property type="evidence" value="ECO:0000318"/>
    <property type="project" value="GO_Central"/>
</dbReference>
<dbReference type="GO" id="GO:0005737">
    <property type="term" value="C:cytoplasm"/>
    <property type="evidence" value="ECO:0007669"/>
    <property type="project" value="UniProtKB-SubCell"/>
</dbReference>
<dbReference type="GO" id="GO:0005886">
    <property type="term" value="C:plasma membrane"/>
    <property type="evidence" value="ECO:0000318"/>
    <property type="project" value="GO_Central"/>
</dbReference>
<dbReference type="GO" id="GO:0005524">
    <property type="term" value="F:ATP binding"/>
    <property type="evidence" value="ECO:0000318"/>
    <property type="project" value="GO_Central"/>
</dbReference>
<dbReference type="GO" id="GO:0008564">
    <property type="term" value="F:protein-exporting ATPase activity"/>
    <property type="evidence" value="ECO:0007669"/>
    <property type="project" value="UniProtKB-EC"/>
</dbReference>
<dbReference type="GO" id="GO:0065002">
    <property type="term" value="P:intracellular protein transmembrane transport"/>
    <property type="evidence" value="ECO:0007669"/>
    <property type="project" value="UniProtKB-UniRule"/>
</dbReference>
<dbReference type="GO" id="GO:0017038">
    <property type="term" value="P:protein import"/>
    <property type="evidence" value="ECO:0007669"/>
    <property type="project" value="InterPro"/>
</dbReference>
<dbReference type="GO" id="GO:0006605">
    <property type="term" value="P:protein targeting"/>
    <property type="evidence" value="ECO:0007669"/>
    <property type="project" value="UniProtKB-UniRule"/>
</dbReference>
<dbReference type="GO" id="GO:0043952">
    <property type="term" value="P:protein transport by the Sec complex"/>
    <property type="evidence" value="ECO:0000318"/>
    <property type="project" value="GO_Central"/>
</dbReference>
<dbReference type="CDD" id="cd17928">
    <property type="entry name" value="DEXDc_SecA"/>
    <property type="match status" value="1"/>
</dbReference>
<dbReference type="CDD" id="cd18803">
    <property type="entry name" value="SF2_C_secA"/>
    <property type="match status" value="1"/>
</dbReference>
<dbReference type="FunFam" id="3.40.50.300:FF:000429">
    <property type="entry name" value="Preprotein translocase subunit SecA"/>
    <property type="match status" value="1"/>
</dbReference>
<dbReference type="Gene3D" id="1.10.3060.10">
    <property type="entry name" value="Helical scaffold and wing domains of SecA"/>
    <property type="match status" value="1"/>
</dbReference>
<dbReference type="Gene3D" id="3.40.50.300">
    <property type="entry name" value="P-loop containing nucleotide triphosphate hydrolases"/>
    <property type="match status" value="3"/>
</dbReference>
<dbReference type="Gene3D" id="3.90.1440.10">
    <property type="entry name" value="SecA, preprotein cross-linking domain"/>
    <property type="match status" value="1"/>
</dbReference>
<dbReference type="HAMAP" id="MF_01382">
    <property type="entry name" value="SecA"/>
    <property type="match status" value="1"/>
</dbReference>
<dbReference type="InterPro" id="IPR014001">
    <property type="entry name" value="Helicase_ATP-bd"/>
</dbReference>
<dbReference type="InterPro" id="IPR001650">
    <property type="entry name" value="Helicase_C-like"/>
</dbReference>
<dbReference type="InterPro" id="IPR027417">
    <property type="entry name" value="P-loop_NTPase"/>
</dbReference>
<dbReference type="InterPro" id="IPR000185">
    <property type="entry name" value="SecA"/>
</dbReference>
<dbReference type="InterPro" id="IPR020937">
    <property type="entry name" value="SecA_CS"/>
</dbReference>
<dbReference type="InterPro" id="IPR011115">
    <property type="entry name" value="SecA_DEAD"/>
</dbReference>
<dbReference type="InterPro" id="IPR014018">
    <property type="entry name" value="SecA_motor_DEAD"/>
</dbReference>
<dbReference type="InterPro" id="IPR011130">
    <property type="entry name" value="SecA_preprotein_X-link_dom"/>
</dbReference>
<dbReference type="InterPro" id="IPR044722">
    <property type="entry name" value="SecA_SF2_C"/>
</dbReference>
<dbReference type="InterPro" id="IPR011116">
    <property type="entry name" value="SecA_Wing/Scaffold"/>
</dbReference>
<dbReference type="InterPro" id="IPR036266">
    <property type="entry name" value="SecA_Wing/Scaffold_sf"/>
</dbReference>
<dbReference type="InterPro" id="IPR036670">
    <property type="entry name" value="SecA_X-link_sf"/>
</dbReference>
<dbReference type="NCBIfam" id="TIGR00963">
    <property type="entry name" value="secA"/>
    <property type="match status" value="1"/>
</dbReference>
<dbReference type="PANTHER" id="PTHR30612:SF0">
    <property type="entry name" value="CHLOROPLAST PROTEIN-TRANSPORTING ATPASE"/>
    <property type="match status" value="1"/>
</dbReference>
<dbReference type="PANTHER" id="PTHR30612">
    <property type="entry name" value="SECA INNER MEMBRANE COMPONENT OF SEC PROTEIN SECRETION SYSTEM"/>
    <property type="match status" value="1"/>
</dbReference>
<dbReference type="Pfam" id="PF21090">
    <property type="entry name" value="P-loop_SecA"/>
    <property type="match status" value="1"/>
</dbReference>
<dbReference type="Pfam" id="PF07517">
    <property type="entry name" value="SecA_DEAD"/>
    <property type="match status" value="1"/>
</dbReference>
<dbReference type="Pfam" id="PF01043">
    <property type="entry name" value="SecA_PP_bind"/>
    <property type="match status" value="1"/>
</dbReference>
<dbReference type="Pfam" id="PF07516">
    <property type="entry name" value="SecA_SW"/>
    <property type="match status" value="1"/>
</dbReference>
<dbReference type="PRINTS" id="PR00906">
    <property type="entry name" value="SECA"/>
</dbReference>
<dbReference type="SMART" id="SM00957">
    <property type="entry name" value="SecA_DEAD"/>
    <property type="match status" value="1"/>
</dbReference>
<dbReference type="SMART" id="SM00958">
    <property type="entry name" value="SecA_PP_bind"/>
    <property type="match status" value="1"/>
</dbReference>
<dbReference type="SUPFAM" id="SSF81886">
    <property type="entry name" value="Helical scaffold and wing domains of SecA"/>
    <property type="match status" value="1"/>
</dbReference>
<dbReference type="SUPFAM" id="SSF52540">
    <property type="entry name" value="P-loop containing nucleoside triphosphate hydrolases"/>
    <property type="match status" value="2"/>
</dbReference>
<dbReference type="SUPFAM" id="SSF81767">
    <property type="entry name" value="Pre-protein crosslinking domain of SecA"/>
    <property type="match status" value="1"/>
</dbReference>
<dbReference type="PROSITE" id="PS01312">
    <property type="entry name" value="SECA"/>
    <property type="match status" value="1"/>
</dbReference>
<dbReference type="PROSITE" id="PS51196">
    <property type="entry name" value="SECA_MOTOR_DEAD"/>
    <property type="match status" value="1"/>
</dbReference>
<proteinExistence type="inferred from homology"/>
<feature type="chain" id="PRO_0000109593" description="Protein translocase subunit SecA">
    <location>
        <begin position="1"/>
        <end position="806"/>
    </location>
</feature>
<feature type="binding site" evidence="1">
    <location>
        <position position="87"/>
    </location>
    <ligand>
        <name>ATP</name>
        <dbReference type="ChEBI" id="CHEBI:30616"/>
    </ligand>
</feature>
<feature type="binding site" evidence="1">
    <location>
        <begin position="105"/>
        <end position="109"/>
    </location>
    <ligand>
        <name>ATP</name>
        <dbReference type="ChEBI" id="CHEBI:30616"/>
    </ligand>
</feature>
<feature type="binding site" evidence="1">
    <location>
        <position position="493"/>
    </location>
    <ligand>
        <name>ATP</name>
        <dbReference type="ChEBI" id="CHEBI:30616"/>
    </ligand>
</feature>
<feature type="sequence conflict" description="In Ref. 2; AAD10541." evidence="2" ref="2">
    <original>IRLG</original>
    <variation>YPFS</variation>
    <location>
        <begin position="494"/>
        <end position="497"/>
    </location>
</feature>
<feature type="sequence conflict" description="In Ref. 2; AAD10541." evidence="2" ref="2">
    <original>S</original>
    <variation>T</variation>
    <location>
        <position position="560"/>
    </location>
</feature>
<feature type="sequence conflict" description="In Ref. 2; AAD10541." evidence="2" ref="2">
    <original>KQRDKFLLA</original>
    <variation>TREVFIS</variation>
    <location>
        <begin position="610"/>
        <end position="618"/>
    </location>
</feature>
<feature type="sequence conflict" description="In Ref. 2; AAD10541." evidence="2" ref="2">
    <original>MI</original>
    <variation>WS</variation>
    <location>
        <begin position="624"/>
        <end position="625"/>
    </location>
</feature>
<feature type="sequence conflict" description="In Ref. 2; AAD10541." evidence="2" ref="2">
    <original>L</original>
    <variation>H</variation>
    <location>
        <position position="629"/>
    </location>
</feature>
<accession>P47318</accession>
<accession>Q49438</accession>
<evidence type="ECO:0000255" key="1">
    <source>
        <dbReference type="HAMAP-Rule" id="MF_01382"/>
    </source>
</evidence>
<evidence type="ECO:0000305" key="2"/>
<comment type="function">
    <text evidence="1">Part of the Sec protein translocase complex. Interacts with the SecYEG preprotein conducting channel. Has a central role in coupling the hydrolysis of ATP to the transfer of proteins into and across the cell membrane, serving as an ATP-driven molecular motor driving the stepwise translocation of polypeptide chains across the membrane.</text>
</comment>
<comment type="catalytic activity">
    <reaction evidence="1">
        <text>ATP + H2O + cellular proteinSide 1 = ADP + phosphate + cellular proteinSide 2.</text>
        <dbReference type="EC" id="7.4.2.8"/>
    </reaction>
</comment>
<comment type="subunit">
    <text evidence="1">Monomer and homodimer. Part of the essential Sec protein translocation apparatus which comprises SecA, SecYEG and auxiliary proteins SecDF. Other proteins may also be involved.</text>
</comment>
<comment type="subcellular location">
    <subcellularLocation>
        <location evidence="1">Cell membrane</location>
        <topology evidence="1">Peripheral membrane protein</topology>
        <orientation evidence="1">Cytoplasmic side</orientation>
    </subcellularLocation>
    <subcellularLocation>
        <location evidence="1">Cytoplasm</location>
    </subcellularLocation>
    <text evidence="1">Distribution is 50-50.</text>
</comment>
<comment type="similarity">
    <text evidence="1">Belongs to the SecA family.</text>
</comment>
<protein>
    <recommendedName>
        <fullName evidence="1">Protein translocase subunit SecA</fullName>
        <ecNumber evidence="1">7.4.2.8</ecNumber>
    </recommendedName>
</protein>
<keyword id="KW-0067">ATP-binding</keyword>
<keyword id="KW-1003">Cell membrane</keyword>
<keyword id="KW-0963">Cytoplasm</keyword>
<keyword id="KW-0472">Membrane</keyword>
<keyword id="KW-0547">Nucleotide-binding</keyword>
<keyword id="KW-0653">Protein transport</keyword>
<keyword id="KW-1185">Reference proteome</keyword>
<keyword id="KW-1278">Translocase</keyword>
<keyword id="KW-0811">Translocation</keyword>
<keyword id="KW-0813">Transport</keyword>